<comment type="subcellular location">
    <subcellularLocation>
        <location evidence="1 2">Nucleus</location>
    </subcellularLocation>
</comment>
<comment type="alternative products">
    <event type="alternative splicing"/>
    <isoform>
        <id>Q94LW3-1</id>
        <name>1</name>
        <sequence type="displayed"/>
    </isoform>
    <isoform>
        <id>Q94LW3-2</id>
        <name>2</name>
        <sequence type="described" ref="VSP_036178 VSP_036179"/>
    </isoform>
</comment>
<comment type="tissue specificity">
    <text evidence="4">Isoform 1 is expressed in roots and flowers, and at lower levels in leaf blades and leaf sheaths. Isoform 2 is expressed in roots and flowers.</text>
</comment>
<comment type="developmental stage">
    <text evidence="3">Expressed in embryo at 3 days after pollination (DAP).</text>
</comment>
<comment type="similarity">
    <text evidence="2">Belongs to the TALE/KNOX homeobox family.</text>
</comment>
<comment type="sequence caution" evidence="6">
    <conflict type="erroneous gene model prediction">
        <sequence resource="EMBL-CDS" id="AAN74840"/>
    </conflict>
    <text>Was originally thought to correspond to two different genes.</text>
</comment>
<comment type="sequence caution" evidence="6">
    <conflict type="erroneous gene model prediction">
        <sequence resource="EMBL-CDS" id="AAN74841"/>
    </conflict>
    <text>Was originally thought to correspond to two different genes.</text>
</comment>
<comment type="sequence caution" evidence="6">
    <conflict type="erroneous gene model prediction">
        <sequence resource="EMBL-CDS" id="ABF93721"/>
    </conflict>
</comment>
<comment type="sequence caution" evidence="6">
    <conflict type="erroneous gene model prediction">
        <sequence resource="EMBL-CDS" id="BAF10719"/>
    </conflict>
</comment>
<comment type="sequence caution" evidence="6">
    <conflict type="erroneous initiation">
        <sequence resource="EMBL-CDS" id="EEE58243"/>
    </conflict>
    <text>Truncated N-terminus.</text>
</comment>
<organism>
    <name type="scientific">Oryza sativa subsp. japonica</name>
    <name type="common">Rice</name>
    <dbReference type="NCBI Taxonomy" id="39947"/>
    <lineage>
        <taxon>Eukaryota</taxon>
        <taxon>Viridiplantae</taxon>
        <taxon>Streptophyta</taxon>
        <taxon>Embryophyta</taxon>
        <taxon>Tracheophyta</taxon>
        <taxon>Spermatophyta</taxon>
        <taxon>Magnoliopsida</taxon>
        <taxon>Liliopsida</taxon>
        <taxon>Poales</taxon>
        <taxon>Poaceae</taxon>
        <taxon>BOP clade</taxon>
        <taxon>Oryzoideae</taxon>
        <taxon>Oryzeae</taxon>
        <taxon>Oryzinae</taxon>
        <taxon>Oryza</taxon>
        <taxon>Oryza sativa</taxon>
    </lineage>
</organism>
<dbReference type="EMBL" id="AB061819">
    <property type="protein sequence ID" value="BAB55660.1"/>
    <property type="molecule type" value="mRNA"/>
</dbReference>
<dbReference type="EMBL" id="AB007629">
    <property type="protein sequence ID" value="BAA77823.1"/>
    <property type="molecule type" value="mRNA"/>
</dbReference>
<dbReference type="EMBL" id="AC098695">
    <property type="protein sequence ID" value="AAN74840.1"/>
    <property type="status" value="ALT_SEQ"/>
    <property type="molecule type" value="Genomic_DNA"/>
</dbReference>
<dbReference type="EMBL" id="AC098695">
    <property type="protein sequence ID" value="AAN74841.1"/>
    <property type="status" value="ALT_SEQ"/>
    <property type="molecule type" value="Genomic_DNA"/>
</dbReference>
<dbReference type="EMBL" id="DP000009">
    <property type="protein sequence ID" value="ABF93720.1"/>
    <property type="molecule type" value="Genomic_DNA"/>
</dbReference>
<dbReference type="EMBL" id="DP000009">
    <property type="protein sequence ID" value="ABF93721.1"/>
    <property type="status" value="ALT_SEQ"/>
    <property type="molecule type" value="Genomic_DNA"/>
</dbReference>
<dbReference type="EMBL" id="DP000009">
    <property type="protein sequence ID" value="ABF93722.1"/>
    <property type="molecule type" value="Genomic_DNA"/>
</dbReference>
<dbReference type="EMBL" id="DP000009">
    <property type="protein sequence ID" value="ABF93723.1"/>
    <property type="molecule type" value="Genomic_DNA"/>
</dbReference>
<dbReference type="EMBL" id="AP008209">
    <property type="protein sequence ID" value="BAF10719.1"/>
    <property type="status" value="ALT_SEQ"/>
    <property type="molecule type" value="Genomic_DNA"/>
</dbReference>
<dbReference type="EMBL" id="AP014959">
    <property type="protein sequence ID" value="BAS82051.1"/>
    <property type="molecule type" value="Genomic_DNA"/>
</dbReference>
<dbReference type="EMBL" id="CM000140">
    <property type="protein sequence ID" value="EEE58243.1"/>
    <property type="status" value="ALT_INIT"/>
    <property type="molecule type" value="Genomic_DNA"/>
</dbReference>
<dbReference type="RefSeq" id="XP_015628919.1">
    <molecule id="Q94LW3-1"/>
    <property type="nucleotide sequence ID" value="XM_015773433.1"/>
</dbReference>
<dbReference type="SMR" id="Q94LW3"/>
<dbReference type="FunCoup" id="Q94LW3">
    <property type="interactions" value="293"/>
</dbReference>
<dbReference type="STRING" id="39947.Q94LW3"/>
<dbReference type="PaxDb" id="39947-Q94LW3"/>
<dbReference type="EnsemblPlants" id="Os03t0123500-02">
    <molecule id="Q94LW3-1"/>
    <property type="protein sequence ID" value="Os03t0123500-02"/>
    <property type="gene ID" value="Os03g0123500"/>
</dbReference>
<dbReference type="GeneID" id="4331449"/>
<dbReference type="Gramene" id="Os03t0123500-02">
    <molecule id="Q94LW3-1"/>
    <property type="protein sequence ID" value="Os03t0123500-02"/>
    <property type="gene ID" value="Os03g0123500"/>
</dbReference>
<dbReference type="KEGG" id="dosa:Os03g0123500"/>
<dbReference type="eggNOG" id="KOG0773">
    <property type="taxonomic scope" value="Eukaryota"/>
</dbReference>
<dbReference type="InParanoid" id="Q94LW3"/>
<dbReference type="OMA" id="LAQYIMV"/>
<dbReference type="OrthoDB" id="10056939at2759"/>
<dbReference type="Proteomes" id="UP000000763">
    <property type="component" value="Chromosome 3"/>
</dbReference>
<dbReference type="Proteomes" id="UP000007752">
    <property type="component" value="Chromosome 3"/>
</dbReference>
<dbReference type="Proteomes" id="UP000059680">
    <property type="component" value="Chromosome 3"/>
</dbReference>
<dbReference type="ExpressionAtlas" id="Q94LW3">
    <property type="expression patterns" value="baseline and differential"/>
</dbReference>
<dbReference type="GO" id="GO:0005634">
    <property type="term" value="C:nucleus"/>
    <property type="evidence" value="ECO:0000318"/>
    <property type="project" value="GO_Central"/>
</dbReference>
<dbReference type="GO" id="GO:0000976">
    <property type="term" value="F:transcription cis-regulatory region binding"/>
    <property type="evidence" value="ECO:0007669"/>
    <property type="project" value="EnsemblPlants"/>
</dbReference>
<dbReference type="GO" id="GO:0010192">
    <property type="term" value="P:mucilage biosynthetic process"/>
    <property type="evidence" value="ECO:0007669"/>
    <property type="project" value="EnsemblPlants"/>
</dbReference>
<dbReference type="GO" id="GO:0080001">
    <property type="term" value="P:mucilage extrusion from seed coat"/>
    <property type="evidence" value="ECO:0007669"/>
    <property type="project" value="EnsemblPlants"/>
</dbReference>
<dbReference type="GO" id="GO:0045892">
    <property type="term" value="P:negative regulation of DNA-templated transcription"/>
    <property type="evidence" value="ECO:0007669"/>
    <property type="project" value="EnsemblPlants"/>
</dbReference>
<dbReference type="GO" id="GO:2000652">
    <property type="term" value="P:regulation of secondary cell wall biogenesis"/>
    <property type="evidence" value="ECO:0007669"/>
    <property type="project" value="EnsemblPlants"/>
</dbReference>
<dbReference type="GO" id="GO:0010214">
    <property type="term" value="P:seed coat development"/>
    <property type="evidence" value="ECO:0007669"/>
    <property type="project" value="EnsemblPlants"/>
</dbReference>
<dbReference type="GO" id="GO:0080112">
    <property type="term" value="P:seed growth"/>
    <property type="evidence" value="ECO:0007669"/>
    <property type="project" value="EnsemblPlants"/>
</dbReference>
<dbReference type="GO" id="GO:0010089">
    <property type="term" value="P:xylem development"/>
    <property type="evidence" value="ECO:0007669"/>
    <property type="project" value="EnsemblPlants"/>
</dbReference>
<dbReference type="CDD" id="cd00086">
    <property type="entry name" value="homeodomain"/>
    <property type="match status" value="1"/>
</dbReference>
<dbReference type="FunFam" id="1.10.10.60:FF:000143">
    <property type="entry name" value="homeobox protein knotted-1-like 3 isoform X1"/>
    <property type="match status" value="1"/>
</dbReference>
<dbReference type="Gene3D" id="1.10.10.60">
    <property type="entry name" value="Homeodomain-like"/>
    <property type="match status" value="1"/>
</dbReference>
<dbReference type="InterPro" id="IPR005539">
    <property type="entry name" value="ELK_dom"/>
</dbReference>
<dbReference type="InterPro" id="IPR001356">
    <property type="entry name" value="HD"/>
</dbReference>
<dbReference type="InterPro" id="IPR009057">
    <property type="entry name" value="Homeodomain-like_sf"/>
</dbReference>
<dbReference type="InterPro" id="IPR008422">
    <property type="entry name" value="KN_HD"/>
</dbReference>
<dbReference type="InterPro" id="IPR005540">
    <property type="entry name" value="KNOX1"/>
</dbReference>
<dbReference type="InterPro" id="IPR005541">
    <property type="entry name" value="KNOX2"/>
</dbReference>
<dbReference type="InterPro" id="IPR050224">
    <property type="entry name" value="TALE_homeobox"/>
</dbReference>
<dbReference type="PANTHER" id="PTHR11850">
    <property type="entry name" value="HOMEOBOX PROTEIN TRANSCRIPTION FACTORS"/>
    <property type="match status" value="1"/>
</dbReference>
<dbReference type="Pfam" id="PF05920">
    <property type="entry name" value="Homeobox_KN"/>
    <property type="match status" value="1"/>
</dbReference>
<dbReference type="Pfam" id="PF03790">
    <property type="entry name" value="KNOX1"/>
    <property type="match status" value="1"/>
</dbReference>
<dbReference type="Pfam" id="PF03791">
    <property type="entry name" value="KNOX2"/>
    <property type="match status" value="1"/>
</dbReference>
<dbReference type="SMART" id="SM00389">
    <property type="entry name" value="HOX"/>
    <property type="match status" value="1"/>
</dbReference>
<dbReference type="SMART" id="SM01255">
    <property type="entry name" value="KNOX1"/>
    <property type="match status" value="1"/>
</dbReference>
<dbReference type="SMART" id="SM01256">
    <property type="entry name" value="KNOX2"/>
    <property type="match status" value="1"/>
</dbReference>
<dbReference type="SUPFAM" id="SSF46689">
    <property type="entry name" value="Homeodomain-like"/>
    <property type="match status" value="1"/>
</dbReference>
<dbReference type="PROSITE" id="PS51213">
    <property type="entry name" value="ELK"/>
    <property type="match status" value="1"/>
</dbReference>
<dbReference type="PROSITE" id="PS00027">
    <property type="entry name" value="HOMEOBOX_1"/>
    <property type="match status" value="1"/>
</dbReference>
<dbReference type="PROSITE" id="PS50071">
    <property type="entry name" value="HOMEOBOX_2"/>
    <property type="match status" value="1"/>
</dbReference>
<feature type="chain" id="PRO_0000360006" description="Homeobox protein knotted-1-like 3">
    <location>
        <begin position="1"/>
        <end position="314"/>
    </location>
</feature>
<feature type="domain" description="ELK" evidence="2">
    <location>
        <begin position="218"/>
        <end position="238"/>
    </location>
</feature>
<feature type="DNA-binding region" description="Homeobox; TALE-type" evidence="1">
    <location>
        <begin position="239"/>
        <end position="302"/>
    </location>
</feature>
<feature type="splice variant" id="VSP_036178" description="In isoform 2." evidence="5">
    <location>
        <begin position="1"/>
        <end position="118"/>
    </location>
</feature>
<feature type="splice variant" id="VSP_036179" description="In isoform 2." evidence="5">
    <original>FL</original>
    <variation>MQ</variation>
    <location>
        <begin position="119"/>
        <end position="120"/>
    </location>
</feature>
<sequence length="314" mass="34607">MQGGDHGGMEMGVGSFTGGGGGGECSSSSATAAAAAAAAAAAAAAEAEERQLLKGEIAVHPLCEQLVAAHVGCLRVATPIDHLPLIDAQLAQSSGLLHSYAAHHRPFLSPHDKQELDSFLAQYMMLLCSFREQLQQHVRVHAVEAVMACREIEQSLQDLTGATLEEGTGATMSEDEDETAPMLEGPMDMGSDGHDLMGFGPLMPTDSERSLMERVRQELKIELKQGFKSRIEDVREEILRKRRAGKLPGDTTTILKQWWQQHSKWPYPTEDDKAKLVEETGLQLKQINNWFINQRKRNWHNNSQTSTLKSKRKR</sequence>
<name>KNOS3_ORYSJ</name>
<protein>
    <recommendedName>
        <fullName>Homeobox protein knotted-1-like 3</fullName>
    </recommendedName>
    <alternativeName>
        <fullName>Homeobox protein HOS66</fullName>
    </alternativeName>
</protein>
<evidence type="ECO:0000255" key="1">
    <source>
        <dbReference type="PROSITE-ProRule" id="PRU00108"/>
    </source>
</evidence>
<evidence type="ECO:0000255" key="2">
    <source>
        <dbReference type="PROSITE-ProRule" id="PRU00559"/>
    </source>
</evidence>
<evidence type="ECO:0000269" key="3">
    <source>
    </source>
</evidence>
<evidence type="ECO:0000269" key="4">
    <source>
    </source>
</evidence>
<evidence type="ECO:0000303" key="5">
    <source>
    </source>
</evidence>
<evidence type="ECO:0000305" key="6"/>
<accession>Q94LW3</accession>
<accession>A0A0P0VSE3</accession>
<accession>B9FAU3</accession>
<accession>Q0DVL9</accession>
<accession>Q10SG6</accession>
<accession>Q8H8G5</accession>
<accession>Q8H8G6</accession>
<accession>Q9SXN1</accession>
<keyword id="KW-0025">Alternative splicing</keyword>
<keyword id="KW-0238">DNA-binding</keyword>
<keyword id="KW-0371">Homeobox</keyword>
<keyword id="KW-0539">Nucleus</keyword>
<keyword id="KW-1185">Reference proteome</keyword>
<gene>
    <name type="primary">HOS66</name>
    <name type="ordered locus">Os03g0123500</name>
    <name type="ordered locus">LOC_Os03g03164</name>
    <name type="ORF">OJ1126B12.15/OJ1126B12.16</name>
    <name type="ORF">OsJ_008895</name>
    <name type="ORF">OsJ_008896</name>
    <name type="ORF">OsJ_09228</name>
</gene>
<proteinExistence type="evidence at transcript level"/>
<reference key="1">
    <citation type="journal article" date="2002" name="Gene">
        <title>Organ-specific alternative transcripts of KNOX family class 2 homeobox genes of rice.</title>
        <authorList>
            <person name="Ito Y."/>
            <person name="Hirochika H."/>
            <person name="Kurata N."/>
        </authorList>
    </citation>
    <scope>NUCLEOTIDE SEQUENCE [MRNA] (ISOFORMS 1 AND 2)</scope>
    <scope>TISSUE SPECIFICITY</scope>
    <source>
        <strain>cv. Nipponbare</strain>
    </source>
</reference>
<reference key="2">
    <citation type="journal article" date="2005" name="Genome Res.">
        <title>Sequence, annotation, and analysis of synteny between rice chromosome 3 and diverged grass species.</title>
        <authorList>
            <consortium name="The rice chromosome 3 sequencing consortium"/>
            <person name="Buell C.R."/>
            <person name="Yuan Q."/>
            <person name="Ouyang S."/>
            <person name="Liu J."/>
            <person name="Zhu W."/>
            <person name="Wang A."/>
            <person name="Maiti R."/>
            <person name="Haas B."/>
            <person name="Wortman J."/>
            <person name="Pertea M."/>
            <person name="Jones K.M."/>
            <person name="Kim M."/>
            <person name="Overton L."/>
            <person name="Tsitrin T."/>
            <person name="Fadrosh D."/>
            <person name="Bera J."/>
            <person name="Weaver B."/>
            <person name="Jin S."/>
            <person name="Johri S."/>
            <person name="Reardon M."/>
            <person name="Webb K."/>
            <person name="Hill J."/>
            <person name="Moffat K."/>
            <person name="Tallon L."/>
            <person name="Van Aken S."/>
            <person name="Lewis M."/>
            <person name="Utterback T."/>
            <person name="Feldblyum T."/>
            <person name="Zismann V."/>
            <person name="Iobst S."/>
            <person name="Hsiao J."/>
            <person name="de Vazeille A.R."/>
            <person name="Salzberg S.L."/>
            <person name="White O."/>
            <person name="Fraser C.M."/>
            <person name="Yu Y."/>
            <person name="Kim H."/>
            <person name="Rambo T."/>
            <person name="Currie J."/>
            <person name="Collura K."/>
            <person name="Kernodle-Thompson S."/>
            <person name="Wei F."/>
            <person name="Kudrna K."/>
            <person name="Ammiraju J.S.S."/>
            <person name="Luo M."/>
            <person name="Goicoechea J.L."/>
            <person name="Wing R.A."/>
            <person name="Henry D."/>
            <person name="Oates R."/>
            <person name="Palmer M."/>
            <person name="Pries G."/>
            <person name="Saski C."/>
            <person name="Simmons J."/>
            <person name="Soderlund C."/>
            <person name="Nelson W."/>
            <person name="de la Bastide M."/>
            <person name="Spiegel L."/>
            <person name="Nascimento L."/>
            <person name="Huang E."/>
            <person name="Preston R."/>
            <person name="Zutavern T."/>
            <person name="Palmer L."/>
            <person name="O'Shaughnessy A."/>
            <person name="Dike S."/>
            <person name="McCombie W.R."/>
            <person name="Minx P."/>
            <person name="Cordum H."/>
            <person name="Wilson R."/>
            <person name="Jin W."/>
            <person name="Lee H.R."/>
            <person name="Jiang J."/>
            <person name="Jackson S."/>
        </authorList>
    </citation>
    <scope>NUCLEOTIDE SEQUENCE [LARGE SCALE GENOMIC DNA]</scope>
    <source>
        <strain>cv. Nipponbare</strain>
    </source>
</reference>
<reference key="3">
    <citation type="journal article" date="2005" name="Nature">
        <title>The map-based sequence of the rice genome.</title>
        <authorList>
            <consortium name="International rice genome sequencing project (IRGSP)"/>
        </authorList>
    </citation>
    <scope>NUCLEOTIDE SEQUENCE [LARGE SCALE GENOMIC DNA]</scope>
    <source>
        <strain>cv. Nipponbare</strain>
    </source>
</reference>
<reference key="4">
    <citation type="journal article" date="2008" name="Nucleic Acids Res.">
        <title>The rice annotation project database (RAP-DB): 2008 update.</title>
        <authorList>
            <consortium name="The rice annotation project (RAP)"/>
        </authorList>
    </citation>
    <scope>GENOME REANNOTATION</scope>
    <source>
        <strain>cv. Nipponbare</strain>
    </source>
</reference>
<reference key="5">
    <citation type="journal article" date="2013" name="Rice">
        <title>Improvement of the Oryza sativa Nipponbare reference genome using next generation sequence and optical map data.</title>
        <authorList>
            <person name="Kawahara Y."/>
            <person name="de la Bastide M."/>
            <person name="Hamilton J.P."/>
            <person name="Kanamori H."/>
            <person name="McCombie W.R."/>
            <person name="Ouyang S."/>
            <person name="Schwartz D.C."/>
            <person name="Tanaka T."/>
            <person name="Wu J."/>
            <person name="Zhou S."/>
            <person name="Childs K.L."/>
            <person name="Davidson R.M."/>
            <person name="Lin H."/>
            <person name="Quesada-Ocampo L."/>
            <person name="Vaillancourt B."/>
            <person name="Sakai H."/>
            <person name="Lee S.S."/>
            <person name="Kim J."/>
            <person name="Numa H."/>
            <person name="Itoh T."/>
            <person name="Buell C.R."/>
            <person name="Matsumoto T."/>
        </authorList>
    </citation>
    <scope>GENOME REANNOTATION</scope>
    <source>
        <strain>cv. Nipponbare</strain>
    </source>
</reference>
<reference key="6">
    <citation type="journal article" date="2005" name="PLoS Biol.">
        <title>The genomes of Oryza sativa: a history of duplications.</title>
        <authorList>
            <person name="Yu J."/>
            <person name="Wang J."/>
            <person name="Lin W."/>
            <person name="Li S."/>
            <person name="Li H."/>
            <person name="Zhou J."/>
            <person name="Ni P."/>
            <person name="Dong W."/>
            <person name="Hu S."/>
            <person name="Zeng C."/>
            <person name="Zhang J."/>
            <person name="Zhang Y."/>
            <person name="Li R."/>
            <person name="Xu Z."/>
            <person name="Li S."/>
            <person name="Li X."/>
            <person name="Zheng H."/>
            <person name="Cong L."/>
            <person name="Lin L."/>
            <person name="Yin J."/>
            <person name="Geng J."/>
            <person name="Li G."/>
            <person name="Shi J."/>
            <person name="Liu J."/>
            <person name="Lv H."/>
            <person name="Li J."/>
            <person name="Wang J."/>
            <person name="Deng Y."/>
            <person name="Ran L."/>
            <person name="Shi X."/>
            <person name="Wang X."/>
            <person name="Wu Q."/>
            <person name="Li C."/>
            <person name="Ren X."/>
            <person name="Wang J."/>
            <person name="Wang X."/>
            <person name="Li D."/>
            <person name="Liu D."/>
            <person name="Zhang X."/>
            <person name="Ji Z."/>
            <person name="Zhao W."/>
            <person name="Sun Y."/>
            <person name="Zhang Z."/>
            <person name="Bao J."/>
            <person name="Han Y."/>
            <person name="Dong L."/>
            <person name="Ji J."/>
            <person name="Chen P."/>
            <person name="Wu S."/>
            <person name="Liu J."/>
            <person name="Xiao Y."/>
            <person name="Bu D."/>
            <person name="Tan J."/>
            <person name="Yang L."/>
            <person name="Ye C."/>
            <person name="Zhang J."/>
            <person name="Xu J."/>
            <person name="Zhou Y."/>
            <person name="Yu Y."/>
            <person name="Zhang B."/>
            <person name="Zhuang S."/>
            <person name="Wei H."/>
            <person name="Liu B."/>
            <person name="Lei M."/>
            <person name="Yu H."/>
            <person name="Li Y."/>
            <person name="Xu H."/>
            <person name="Wei S."/>
            <person name="He X."/>
            <person name="Fang L."/>
            <person name="Zhang Z."/>
            <person name="Zhang Y."/>
            <person name="Huang X."/>
            <person name="Su Z."/>
            <person name="Tong W."/>
            <person name="Li J."/>
            <person name="Tong Z."/>
            <person name="Li S."/>
            <person name="Ye J."/>
            <person name="Wang L."/>
            <person name="Fang L."/>
            <person name="Lei T."/>
            <person name="Chen C.-S."/>
            <person name="Chen H.-C."/>
            <person name="Xu Z."/>
            <person name="Li H."/>
            <person name="Huang H."/>
            <person name="Zhang F."/>
            <person name="Xu H."/>
            <person name="Li N."/>
            <person name="Zhao C."/>
            <person name="Li S."/>
            <person name="Dong L."/>
            <person name="Huang Y."/>
            <person name="Li L."/>
            <person name="Xi Y."/>
            <person name="Qi Q."/>
            <person name="Li W."/>
            <person name="Zhang B."/>
            <person name="Hu W."/>
            <person name="Zhang Y."/>
            <person name="Tian X."/>
            <person name="Jiao Y."/>
            <person name="Liang X."/>
            <person name="Jin J."/>
            <person name="Gao L."/>
            <person name="Zheng W."/>
            <person name="Hao B."/>
            <person name="Liu S.-M."/>
            <person name="Wang W."/>
            <person name="Yuan L."/>
            <person name="Cao M."/>
            <person name="McDermott J."/>
            <person name="Samudrala R."/>
            <person name="Wang J."/>
            <person name="Wong G.K.-S."/>
            <person name="Yang H."/>
        </authorList>
    </citation>
    <scope>NUCLEOTIDE SEQUENCE [LARGE SCALE GENOMIC DNA]</scope>
    <source>
        <strain>cv. Nipponbare</strain>
    </source>
</reference>
<reference key="7">
    <citation type="journal article" date="1999" name="Biochim. Biophys. Acta">
        <title>Expression of novel homeobox genes in early embryogenesis in rice.</title>
        <authorList>
            <person name="Ito Y."/>
            <person name="Eiguchi M."/>
            <person name="Kurata N."/>
        </authorList>
    </citation>
    <scope>DEVELOPMENTAL STAGE</scope>
</reference>
<reference key="8">
    <citation type="journal article" date="2008" name="FEBS J.">
        <title>Genome-wide identification, classification, evolutionary expansion and expression analyses of homeobox genes in rice.</title>
        <authorList>
            <person name="Jain M."/>
            <person name="Tyagi A.K."/>
            <person name="Khurana J.P."/>
        </authorList>
    </citation>
    <scope>GENE FAMILY</scope>
    <scope>NOMENCLATURE</scope>
</reference>